<reference key="1">
    <citation type="journal article" date="2007" name="BMC Genomics">
        <title>The full-ORF clone resource of the German cDNA consortium.</title>
        <authorList>
            <person name="Bechtel S."/>
            <person name="Rosenfelder H."/>
            <person name="Duda A."/>
            <person name="Schmidt C.P."/>
            <person name="Ernst U."/>
            <person name="Wellenreuther R."/>
            <person name="Mehrle A."/>
            <person name="Schuster C."/>
            <person name="Bahr A."/>
            <person name="Bloecker H."/>
            <person name="Heubner D."/>
            <person name="Hoerlein A."/>
            <person name="Michel G."/>
            <person name="Wedler H."/>
            <person name="Koehrer K."/>
            <person name="Ottenwaelder B."/>
            <person name="Poustka A."/>
            <person name="Wiemann S."/>
            <person name="Schupp I."/>
        </authorList>
    </citation>
    <scope>NUCLEOTIDE SEQUENCE [LARGE SCALE MRNA] (ISOFORM 2)</scope>
    <source>
        <tissue>Salivary gland</tissue>
    </source>
</reference>
<reference key="2">
    <citation type="journal article" date="2004" name="Genome Res.">
        <title>The status, quality, and expansion of the NIH full-length cDNA project: the Mammalian Gene Collection (MGC).</title>
        <authorList>
            <consortium name="The MGC Project Team"/>
        </authorList>
    </citation>
    <scope>NUCLEOTIDE SEQUENCE [LARGE SCALE MRNA] (ISOFORM 1)</scope>
</reference>
<protein>
    <recommendedName>
        <fullName evidence="1">Kynurenine formamidase</fullName>
        <shortName evidence="1">KFA</shortName>
        <shortName evidence="1">KFase</shortName>
        <ecNumber evidence="1">3.5.1.9</ecNumber>
    </recommendedName>
    <alternativeName>
        <fullName evidence="1">Arylformamidase</fullName>
    </alternativeName>
    <alternativeName>
        <fullName evidence="1">N-formylkynurenine formamidase</fullName>
        <shortName evidence="1">FKF</shortName>
    </alternativeName>
</protein>
<feature type="chain" id="PRO_0000248308" description="Kynurenine formamidase">
    <location>
        <begin position="1"/>
        <end position="303"/>
    </location>
</feature>
<feature type="short sequence motif" description="HGGXW">
    <location>
        <begin position="95"/>
        <end position="99"/>
    </location>
</feature>
<feature type="active site" description="Nucleophile" evidence="1">
    <location>
        <position position="164"/>
    </location>
</feature>
<feature type="active site" evidence="1">
    <location>
        <position position="247"/>
    </location>
</feature>
<feature type="active site" evidence="1">
    <location>
        <position position="279"/>
    </location>
</feature>
<feature type="splice variant" id="VSP_038002" description="In isoform 2." evidence="2">
    <original>Q</original>
    <variation>QVLPVQ</variation>
    <location>
        <position position="260"/>
    </location>
</feature>
<feature type="sequence conflict" description="In Ref. 1; CAH56149." evidence="3" ref="1">
    <original>S</original>
    <variation>N</variation>
    <location>
        <position position="222"/>
    </location>
</feature>
<proteinExistence type="evidence at protein level"/>
<gene>
    <name evidence="1" type="primary">AFMID</name>
</gene>
<comment type="function">
    <text evidence="1">Catalyzes the hydrolysis of N-formyl-L-kynurenine to L-kynurenine, the second step in the kynurenine pathway of tryptophan degradation. Kynurenine may be further oxidized to nicotinic acid, NAD(H) and NADP(H). Required for elimination of toxic metabolites.</text>
</comment>
<comment type="catalytic activity">
    <reaction evidence="1">
        <text>N-formyl-L-kynurenine + H2O = L-kynurenine + formate + H(+)</text>
        <dbReference type="Rhea" id="RHEA:13009"/>
        <dbReference type="ChEBI" id="CHEBI:15377"/>
        <dbReference type="ChEBI" id="CHEBI:15378"/>
        <dbReference type="ChEBI" id="CHEBI:15740"/>
        <dbReference type="ChEBI" id="CHEBI:57959"/>
        <dbReference type="ChEBI" id="CHEBI:58629"/>
        <dbReference type="EC" id="3.5.1.9"/>
    </reaction>
</comment>
<comment type="pathway">
    <text evidence="1">Amino-acid degradation; L-tryptophan degradation via kynurenine pathway; L-kynurenine from L-tryptophan: step 2/2.</text>
</comment>
<comment type="subunit">
    <text evidence="1">Homodimer.</text>
</comment>
<comment type="interaction">
    <interactant intactId="EBI-13286382">
        <id>Q63HM1</id>
    </interactant>
    <interactant intactId="EBI-742054">
        <id>Q96D03</id>
        <label>DDIT4L</label>
    </interactant>
    <organismsDiffer>false</organismsDiffer>
    <experiments>5</experiments>
</comment>
<comment type="interaction">
    <interactant intactId="EBI-13286382">
        <id>Q63HM1</id>
    </interactant>
    <interactant intactId="EBI-394640">
        <id>Q9BUE0</id>
        <label>MED18</label>
    </interactant>
    <organismsDiffer>false</organismsDiffer>
    <experiments>3</experiments>
</comment>
<comment type="interaction">
    <interactant intactId="EBI-13286382">
        <id>Q63HM1</id>
    </interactant>
    <interactant intactId="EBI-19944212">
        <id>A8MW99</id>
        <label>MEI4</label>
    </interactant>
    <organismsDiffer>false</organismsDiffer>
    <experiments>3</experiments>
</comment>
<comment type="subcellular location">
    <subcellularLocation>
        <location evidence="1">Cytoplasm</location>
        <location evidence="1">Cytosol</location>
    </subcellularLocation>
    <subcellularLocation>
        <location evidence="1">Nucleus</location>
    </subcellularLocation>
    <text evidence="1">Predominantly cytosolic. Some fraction is nuclear.</text>
</comment>
<comment type="alternative products">
    <event type="alternative splicing"/>
    <isoform>
        <id>Q63HM1-1</id>
        <name>1</name>
        <sequence type="displayed"/>
    </isoform>
    <isoform>
        <id>Q63HM1-2</id>
        <name>2</name>
        <sequence type="described" ref="VSP_038002"/>
    </isoform>
</comment>
<comment type="domain">
    <text evidence="1">The main chain amide nitrogen atoms of the second glycine and its adjacent residue in the HGGXW motif define the oxyanion hole, and stabilize the oxyanion that forms during the nucleophilic attack by the catalytic serine during substrate cleavage.</text>
</comment>
<comment type="similarity">
    <text evidence="1">Belongs to the kynurenine formamidase family.</text>
</comment>
<keyword id="KW-0025">Alternative splicing</keyword>
<keyword id="KW-0963">Cytoplasm</keyword>
<keyword id="KW-0378">Hydrolase</keyword>
<keyword id="KW-0539">Nucleus</keyword>
<keyword id="KW-1267">Proteomics identification</keyword>
<keyword id="KW-1185">Reference proteome</keyword>
<keyword id="KW-0823">Tryptophan catabolism</keyword>
<accession>Q63HM1</accession>
<accession>A2RUB3</accession>
<dbReference type="EC" id="3.5.1.9" evidence="1"/>
<dbReference type="EMBL" id="BX648442">
    <property type="protein sequence ID" value="CAH56149.1"/>
    <property type="molecule type" value="mRNA"/>
</dbReference>
<dbReference type="EMBL" id="BC132824">
    <property type="protein sequence ID" value="AAI32825.1"/>
    <property type="molecule type" value="mRNA"/>
</dbReference>
<dbReference type="CCDS" id="CCDS32750.2">
    <molecule id="Q63HM1-1"/>
</dbReference>
<dbReference type="CCDS" id="CCDS45801.1">
    <molecule id="Q63HM1-2"/>
</dbReference>
<dbReference type="RefSeq" id="NP_001010982.2">
    <molecule id="Q63HM1-1"/>
    <property type="nucleotide sequence ID" value="NM_001010982.5"/>
</dbReference>
<dbReference type="RefSeq" id="NP_001138998.1">
    <molecule id="Q63HM1-2"/>
    <property type="nucleotide sequence ID" value="NM_001145526.3"/>
</dbReference>
<dbReference type="SMR" id="Q63HM1"/>
<dbReference type="BioGRID" id="125914">
    <property type="interactions" value="16"/>
</dbReference>
<dbReference type="FunCoup" id="Q63HM1">
    <property type="interactions" value="767"/>
</dbReference>
<dbReference type="IntAct" id="Q63HM1">
    <property type="interactions" value="6"/>
</dbReference>
<dbReference type="MINT" id="Q63HM1"/>
<dbReference type="STRING" id="9606.ENSP00000328938"/>
<dbReference type="ESTHER" id="human-AFMID">
    <property type="family name" value="Kynurenine-formamidase"/>
</dbReference>
<dbReference type="MEROPS" id="S09.977"/>
<dbReference type="GlyGen" id="Q63HM1">
    <property type="glycosylation" value="1 site, 1 O-linked glycan (1 site)"/>
</dbReference>
<dbReference type="iPTMnet" id="Q63HM1"/>
<dbReference type="PhosphoSitePlus" id="Q63HM1"/>
<dbReference type="BioMuta" id="AFMID"/>
<dbReference type="DMDM" id="259016175"/>
<dbReference type="jPOST" id="Q63HM1"/>
<dbReference type="MassIVE" id="Q63HM1"/>
<dbReference type="PaxDb" id="9606-ENSP00000328938"/>
<dbReference type="PeptideAtlas" id="Q63HM1"/>
<dbReference type="ProteomicsDB" id="65879">
    <molecule id="Q63HM1-1"/>
</dbReference>
<dbReference type="ProteomicsDB" id="65880">
    <molecule id="Q63HM1-2"/>
</dbReference>
<dbReference type="Antibodypedia" id="19735">
    <property type="antibodies" value="80 antibodies from 19 providers"/>
</dbReference>
<dbReference type="DNASU" id="125061"/>
<dbReference type="Ensembl" id="ENST00000327898.9">
    <molecule id="Q63HM1-2"/>
    <property type="protein sequence ID" value="ENSP00000328938.5"/>
    <property type="gene ID" value="ENSG00000183077.16"/>
</dbReference>
<dbReference type="Ensembl" id="ENST00000409257.10">
    <molecule id="Q63HM1-1"/>
    <property type="protein sequence ID" value="ENSP00000386890.4"/>
    <property type="gene ID" value="ENSG00000183077.16"/>
</dbReference>
<dbReference type="GeneID" id="125061"/>
<dbReference type="KEGG" id="hsa:125061"/>
<dbReference type="MANE-Select" id="ENST00000409257.10">
    <property type="protein sequence ID" value="ENSP00000386890.4"/>
    <property type="RefSeq nucleotide sequence ID" value="NM_001010982.5"/>
    <property type="RefSeq protein sequence ID" value="NP_001010982.2"/>
</dbReference>
<dbReference type="UCSC" id="uc002juz.4">
    <molecule id="Q63HM1-1"/>
    <property type="organism name" value="human"/>
</dbReference>
<dbReference type="AGR" id="HGNC:20910"/>
<dbReference type="CTD" id="125061"/>
<dbReference type="DisGeNET" id="125061"/>
<dbReference type="GeneCards" id="AFMID"/>
<dbReference type="HGNC" id="HGNC:20910">
    <property type="gene designation" value="AFMID"/>
</dbReference>
<dbReference type="HPA" id="ENSG00000183077">
    <property type="expression patterns" value="Tissue enhanced (liver)"/>
</dbReference>
<dbReference type="neXtProt" id="NX_Q63HM1"/>
<dbReference type="OpenTargets" id="ENSG00000183077"/>
<dbReference type="PharmGKB" id="PA134958475"/>
<dbReference type="VEuPathDB" id="HostDB:ENSG00000183077"/>
<dbReference type="eggNOG" id="KOG4627">
    <property type="taxonomic scope" value="Eukaryota"/>
</dbReference>
<dbReference type="GeneTree" id="ENSGT00390000011093"/>
<dbReference type="HOGENOM" id="CLU_012494_4_7_1"/>
<dbReference type="InParanoid" id="Q63HM1"/>
<dbReference type="OMA" id="WAVAMPS"/>
<dbReference type="OrthoDB" id="433474at2759"/>
<dbReference type="PAN-GO" id="Q63HM1">
    <property type="GO annotations" value="2 GO annotations based on evolutionary models"/>
</dbReference>
<dbReference type="PhylomeDB" id="Q63HM1"/>
<dbReference type="TreeFam" id="TF315112"/>
<dbReference type="PathwayCommons" id="Q63HM1"/>
<dbReference type="Reactome" id="R-HSA-71240">
    <property type="pathway name" value="Tryptophan catabolism"/>
</dbReference>
<dbReference type="SignaLink" id="Q63HM1"/>
<dbReference type="UniPathway" id="UPA00333">
    <property type="reaction ID" value="UER00454"/>
</dbReference>
<dbReference type="BioGRID-ORCS" id="125061">
    <property type="hits" value="12 hits in 1152 CRISPR screens"/>
</dbReference>
<dbReference type="ChiTaRS" id="AFMID">
    <property type="organism name" value="human"/>
</dbReference>
<dbReference type="GenomeRNAi" id="125061"/>
<dbReference type="Pharos" id="Q63HM1">
    <property type="development level" value="Tbio"/>
</dbReference>
<dbReference type="PRO" id="PR:Q63HM1"/>
<dbReference type="Proteomes" id="UP000005640">
    <property type="component" value="Chromosome 17"/>
</dbReference>
<dbReference type="RNAct" id="Q63HM1">
    <property type="molecule type" value="protein"/>
</dbReference>
<dbReference type="Bgee" id="ENSG00000183077">
    <property type="expression patterns" value="Expressed in right lobe of liver and 109 other cell types or tissues"/>
</dbReference>
<dbReference type="ExpressionAtlas" id="Q63HM1">
    <property type="expression patterns" value="baseline and differential"/>
</dbReference>
<dbReference type="GO" id="GO:0005737">
    <property type="term" value="C:cytoplasm"/>
    <property type="evidence" value="ECO:0000318"/>
    <property type="project" value="GO_Central"/>
</dbReference>
<dbReference type="GO" id="GO:0005829">
    <property type="term" value="C:cytosol"/>
    <property type="evidence" value="ECO:0007669"/>
    <property type="project" value="UniProtKB-SubCell"/>
</dbReference>
<dbReference type="GO" id="GO:0005634">
    <property type="term" value="C:nucleus"/>
    <property type="evidence" value="ECO:0007669"/>
    <property type="project" value="UniProtKB-SubCell"/>
</dbReference>
<dbReference type="GO" id="GO:0004061">
    <property type="term" value="F:arylformamidase activity"/>
    <property type="evidence" value="ECO:0007669"/>
    <property type="project" value="UniProtKB-UniRule"/>
</dbReference>
<dbReference type="GO" id="GO:0034354">
    <property type="term" value="P:'de novo' NAD biosynthetic process from L-tryptophan"/>
    <property type="evidence" value="ECO:0007669"/>
    <property type="project" value="UniProtKB-UniRule"/>
</dbReference>
<dbReference type="GO" id="GO:0019441">
    <property type="term" value="P:L-tryptophan catabolic process to kynurenine"/>
    <property type="evidence" value="ECO:0000318"/>
    <property type="project" value="GO_Central"/>
</dbReference>
<dbReference type="FunFam" id="3.40.50.1820:FF:000134">
    <property type="entry name" value="Kynurenine formamidase"/>
    <property type="match status" value="1"/>
</dbReference>
<dbReference type="Gene3D" id="3.40.50.1820">
    <property type="entry name" value="alpha/beta hydrolase"/>
    <property type="match status" value="1"/>
</dbReference>
<dbReference type="HAMAP" id="MF_03014">
    <property type="entry name" value="KFase"/>
    <property type="match status" value="1"/>
</dbReference>
<dbReference type="InterPro" id="IPR013094">
    <property type="entry name" value="AB_hydrolase_3"/>
</dbReference>
<dbReference type="InterPro" id="IPR029058">
    <property type="entry name" value="AB_hydrolase_fold"/>
</dbReference>
<dbReference type="InterPro" id="IPR050300">
    <property type="entry name" value="GDXG_lipolytic_enzyme"/>
</dbReference>
<dbReference type="InterPro" id="IPR027519">
    <property type="entry name" value="KFase_ver/fungi-typ"/>
</dbReference>
<dbReference type="PANTHER" id="PTHR48081">
    <property type="entry name" value="AB HYDROLASE SUPERFAMILY PROTEIN C4A8.06C"/>
    <property type="match status" value="1"/>
</dbReference>
<dbReference type="PANTHER" id="PTHR48081:SF33">
    <property type="entry name" value="KYNURENINE FORMAMIDASE"/>
    <property type="match status" value="1"/>
</dbReference>
<dbReference type="Pfam" id="PF07859">
    <property type="entry name" value="Abhydrolase_3"/>
    <property type="match status" value="1"/>
</dbReference>
<dbReference type="SUPFAM" id="SSF53474">
    <property type="entry name" value="alpha/beta-Hydrolases"/>
    <property type="match status" value="1"/>
</dbReference>
<name>KFA_HUMAN</name>
<organism>
    <name type="scientific">Homo sapiens</name>
    <name type="common">Human</name>
    <dbReference type="NCBI Taxonomy" id="9606"/>
    <lineage>
        <taxon>Eukaryota</taxon>
        <taxon>Metazoa</taxon>
        <taxon>Chordata</taxon>
        <taxon>Craniata</taxon>
        <taxon>Vertebrata</taxon>
        <taxon>Euteleostomi</taxon>
        <taxon>Mammalia</taxon>
        <taxon>Eutheria</taxon>
        <taxon>Euarchontoglires</taxon>
        <taxon>Primates</taxon>
        <taxon>Haplorrhini</taxon>
        <taxon>Catarrhini</taxon>
        <taxon>Hominidae</taxon>
        <taxon>Homo</taxon>
    </lineage>
</organism>
<evidence type="ECO:0000255" key="1">
    <source>
        <dbReference type="HAMAP-Rule" id="MF_03014"/>
    </source>
</evidence>
<evidence type="ECO:0000303" key="2">
    <source>
    </source>
</evidence>
<evidence type="ECO:0000305" key="3"/>
<sequence>MMDVSGVGFPSKVPWKKMSAEELENQYCPSRWVVRLGAEEALRTYSQIGIEATTRARATRKSLLHVPYGDGEGEKVDIYFPDESSEALPFFLFFHGGYWQSGSKDESAFMVHPLTAQGVAVVIVAYGIAPKGTLDHMVDQVTRSVAFVQKRYPSNKGIYLCGHSAGAHLAAMMLLADWTKHGVTPNLRGFFLVSGVFDLEPIVYTSQNVALQLTLEDAQRNSPQLKVAQAQPVDPTCRVLVVVGQFDSPEFHRQSWEFYQTLCQGEWKASFEELHDVDHFEIVENLTQKDNVLTQIILKTIFQ</sequence>